<organism>
    <name type="scientific">Methanocaldococcus jannaschii (strain ATCC 43067 / DSM 2661 / JAL-1 / JCM 10045 / NBRC 100440)</name>
    <name type="common">Methanococcus jannaschii</name>
    <dbReference type="NCBI Taxonomy" id="243232"/>
    <lineage>
        <taxon>Archaea</taxon>
        <taxon>Methanobacteriati</taxon>
        <taxon>Methanobacteriota</taxon>
        <taxon>Methanomada group</taxon>
        <taxon>Methanococci</taxon>
        <taxon>Methanococcales</taxon>
        <taxon>Methanocaldococcaceae</taxon>
        <taxon>Methanocaldococcus</taxon>
    </lineage>
</organism>
<keyword id="KW-1185">Reference proteome</keyword>
<reference key="1">
    <citation type="journal article" date="1996" name="Science">
        <title>Complete genome sequence of the methanogenic archaeon, Methanococcus jannaschii.</title>
        <authorList>
            <person name="Bult C.J."/>
            <person name="White O."/>
            <person name="Olsen G.J."/>
            <person name="Zhou L."/>
            <person name="Fleischmann R.D."/>
            <person name="Sutton G.G."/>
            <person name="Blake J.A."/>
            <person name="FitzGerald L.M."/>
            <person name="Clayton R.A."/>
            <person name="Gocayne J.D."/>
            <person name="Kerlavage A.R."/>
            <person name="Dougherty B.A."/>
            <person name="Tomb J.-F."/>
            <person name="Adams M.D."/>
            <person name="Reich C.I."/>
            <person name="Overbeek R."/>
            <person name="Kirkness E.F."/>
            <person name="Weinstock K.G."/>
            <person name="Merrick J.M."/>
            <person name="Glodek A."/>
            <person name="Scott J.L."/>
            <person name="Geoghagen N.S.M."/>
            <person name="Weidman J.F."/>
            <person name="Fuhrmann J.L."/>
            <person name="Nguyen D."/>
            <person name="Utterback T.R."/>
            <person name="Kelley J.M."/>
            <person name="Peterson J.D."/>
            <person name="Sadow P.W."/>
            <person name="Hanna M.C."/>
            <person name="Cotton M.D."/>
            <person name="Roberts K.M."/>
            <person name="Hurst M.A."/>
            <person name="Kaine B.P."/>
            <person name="Borodovsky M."/>
            <person name="Klenk H.-P."/>
            <person name="Fraser C.M."/>
            <person name="Smith H.O."/>
            <person name="Woese C.R."/>
            <person name="Venter J.C."/>
        </authorList>
    </citation>
    <scope>NUCLEOTIDE SEQUENCE [LARGE SCALE GENOMIC DNA]</scope>
    <source>
        <strain>ATCC 43067 / DSM 2661 / JAL-1 / JCM 10045 / NBRC 100440</strain>
    </source>
</reference>
<accession>Q57894</accession>
<proteinExistence type="predicted"/>
<gene>
    <name type="ordered locus">MJ0452</name>
</gene>
<sequence>MMSVLVIVGCPEPPALIPSVLYLTNQLKKKGFNVIIAANPAALKLLEVADDDKYYLKGVGAVDIDGGLRGIEGINKIISFVHNDGGVSYTVTYKAKYNKPTYAIVFGRQINKDYVETLKNSNIGVYTARAFHNPMPIVNRIKEILANL</sequence>
<dbReference type="EMBL" id="L77117">
    <property type="protein sequence ID" value="AAB98441.1"/>
    <property type="molecule type" value="Genomic_DNA"/>
</dbReference>
<dbReference type="PIR" id="D64356">
    <property type="entry name" value="D64356"/>
</dbReference>
<dbReference type="RefSeq" id="WP_010869951.1">
    <property type="nucleotide sequence ID" value="NC_000909.1"/>
</dbReference>
<dbReference type="SMR" id="Q57894"/>
<dbReference type="FunCoup" id="Q57894">
    <property type="interactions" value="1"/>
</dbReference>
<dbReference type="STRING" id="243232.MJ_0452"/>
<dbReference type="PaxDb" id="243232-MJ_0452"/>
<dbReference type="EnsemblBacteria" id="AAB98441">
    <property type="protein sequence ID" value="AAB98441"/>
    <property type="gene ID" value="MJ_0452"/>
</dbReference>
<dbReference type="GeneID" id="1451313"/>
<dbReference type="KEGG" id="mja:MJ_0452"/>
<dbReference type="eggNOG" id="arCOG04845">
    <property type="taxonomic scope" value="Archaea"/>
</dbReference>
<dbReference type="HOGENOM" id="CLU_142041_0_0_2"/>
<dbReference type="InParanoid" id="Q57894"/>
<dbReference type="OrthoDB" id="144859at2157"/>
<dbReference type="PhylomeDB" id="Q57894"/>
<dbReference type="Proteomes" id="UP000000805">
    <property type="component" value="Chromosome"/>
</dbReference>
<dbReference type="Gene3D" id="3.40.50.10160">
    <property type="entry name" value="MTH777-like"/>
    <property type="match status" value="1"/>
</dbReference>
<dbReference type="InterPro" id="IPR036608">
    <property type="entry name" value="MTH777-like_sf"/>
</dbReference>
<dbReference type="InterPro" id="IPR012033">
    <property type="entry name" value="UCP006600"/>
</dbReference>
<dbReference type="Pfam" id="PF09001">
    <property type="entry name" value="DUF1890"/>
    <property type="match status" value="1"/>
</dbReference>
<dbReference type="PIRSF" id="PIRSF006600">
    <property type="entry name" value="UCP006600"/>
    <property type="match status" value="1"/>
</dbReference>
<dbReference type="SUPFAM" id="SSF75181">
    <property type="entry name" value="Hypothetical protein MTH777 (MT0777)"/>
    <property type="match status" value="1"/>
</dbReference>
<feature type="chain" id="PRO_0000106882" description="Uncharacterized protein MJ0452">
    <location>
        <begin position="1"/>
        <end position="148"/>
    </location>
</feature>
<name>Y452_METJA</name>
<protein>
    <recommendedName>
        <fullName>Uncharacterized protein MJ0452</fullName>
    </recommendedName>
</protein>